<comment type="function">
    <text evidence="1">Involved in peptide bond synthesis. Stimulates efficient translation and peptide-bond synthesis on native or reconstituted 70S ribosomes in vitro. Probably functions indirectly by altering the affinity of the ribosome for aminoacyl-tRNA, thus increasing their reactivity as acceptors for peptidyl transferase.</text>
</comment>
<comment type="pathway">
    <text evidence="1">Protein biosynthesis; polypeptide chain elongation.</text>
</comment>
<comment type="subcellular location">
    <subcellularLocation>
        <location evidence="1">Cytoplasm</location>
    </subcellularLocation>
</comment>
<comment type="similarity">
    <text evidence="1">Belongs to the elongation factor P family.</text>
</comment>
<protein>
    <recommendedName>
        <fullName evidence="1">Elongation factor P</fullName>
        <shortName evidence="1">EF-P</shortName>
    </recommendedName>
</protein>
<accession>B2S3B8</accession>
<reference key="1">
    <citation type="journal article" date="2008" name="BMC Microbiol.">
        <title>Complete genome sequence of Treponema pallidum ssp. pallidum strain SS14 determined with oligonucleotide arrays.</title>
        <authorList>
            <person name="Matejkova P."/>
            <person name="Strouhal M."/>
            <person name="Smajs D."/>
            <person name="Norris S.J."/>
            <person name="Palzkill T."/>
            <person name="Petrosino J.F."/>
            <person name="Sodergren E."/>
            <person name="Norton J.E."/>
            <person name="Singh J."/>
            <person name="Richmond T.A."/>
            <person name="Molla M.N."/>
            <person name="Albert T.J."/>
            <person name="Weinstock G.M."/>
        </authorList>
    </citation>
    <scope>NUCLEOTIDE SEQUENCE [LARGE SCALE GENOMIC DNA]</scope>
    <source>
        <strain>SS14</strain>
    </source>
</reference>
<feature type="chain" id="PRO_1000096220" description="Elongation factor P">
    <location>
        <begin position="1"/>
        <end position="187"/>
    </location>
</feature>
<sequence>MIRGGDIAKGTVLLHKGAPYLVVEREFVNPGKGAAFARVKMKHLRDGSVLTQTVKTSDTVEDAVVDSHRAQYQYDDGECFVFMDTRSFEQIFVSKGNVPGRERYLREGDEYDILIWNGESIDIKIPTKMVFRVAHSEPYLKGDTVSGATKPVTTETGLVVRVPLFIKQGEKILINTETNEYQERVND</sequence>
<name>EFP_TREPS</name>
<proteinExistence type="inferred from homology"/>
<organism>
    <name type="scientific">Treponema pallidum subsp. pallidum (strain SS14)</name>
    <dbReference type="NCBI Taxonomy" id="455434"/>
    <lineage>
        <taxon>Bacteria</taxon>
        <taxon>Pseudomonadati</taxon>
        <taxon>Spirochaetota</taxon>
        <taxon>Spirochaetia</taxon>
        <taxon>Spirochaetales</taxon>
        <taxon>Treponemataceae</taxon>
        <taxon>Treponema</taxon>
    </lineage>
</organism>
<keyword id="KW-0963">Cytoplasm</keyword>
<keyword id="KW-0251">Elongation factor</keyword>
<keyword id="KW-0648">Protein biosynthesis</keyword>
<dbReference type="EMBL" id="CP000805">
    <property type="protein sequence ID" value="ACD70947.1"/>
    <property type="molecule type" value="Genomic_DNA"/>
</dbReference>
<dbReference type="RefSeq" id="WP_010881973.1">
    <property type="nucleotide sequence ID" value="NC_021508.1"/>
</dbReference>
<dbReference type="SMR" id="B2S3B8"/>
<dbReference type="GeneID" id="93876294"/>
<dbReference type="KEGG" id="tpp:TPASS_0525"/>
<dbReference type="PATRIC" id="fig|455434.6.peg.523"/>
<dbReference type="UniPathway" id="UPA00345"/>
<dbReference type="Proteomes" id="UP000001202">
    <property type="component" value="Chromosome"/>
</dbReference>
<dbReference type="GO" id="GO:0005737">
    <property type="term" value="C:cytoplasm"/>
    <property type="evidence" value="ECO:0007669"/>
    <property type="project" value="UniProtKB-SubCell"/>
</dbReference>
<dbReference type="GO" id="GO:0003746">
    <property type="term" value="F:translation elongation factor activity"/>
    <property type="evidence" value="ECO:0007669"/>
    <property type="project" value="UniProtKB-UniRule"/>
</dbReference>
<dbReference type="GO" id="GO:0043043">
    <property type="term" value="P:peptide biosynthetic process"/>
    <property type="evidence" value="ECO:0007669"/>
    <property type="project" value="InterPro"/>
</dbReference>
<dbReference type="CDD" id="cd04470">
    <property type="entry name" value="S1_EF-P_repeat_1"/>
    <property type="match status" value="1"/>
</dbReference>
<dbReference type="CDD" id="cd05794">
    <property type="entry name" value="S1_EF-P_repeat_2"/>
    <property type="match status" value="1"/>
</dbReference>
<dbReference type="FunFam" id="2.30.30.30:FF:000003">
    <property type="entry name" value="Elongation factor P"/>
    <property type="match status" value="1"/>
</dbReference>
<dbReference type="FunFam" id="2.40.50.140:FF:000004">
    <property type="entry name" value="Elongation factor P"/>
    <property type="match status" value="1"/>
</dbReference>
<dbReference type="FunFam" id="2.40.50.140:FF:000009">
    <property type="entry name" value="Elongation factor P"/>
    <property type="match status" value="1"/>
</dbReference>
<dbReference type="Gene3D" id="2.30.30.30">
    <property type="match status" value="1"/>
</dbReference>
<dbReference type="Gene3D" id="2.40.50.140">
    <property type="entry name" value="Nucleic acid-binding proteins"/>
    <property type="match status" value="2"/>
</dbReference>
<dbReference type="HAMAP" id="MF_00141">
    <property type="entry name" value="EF_P"/>
    <property type="match status" value="1"/>
</dbReference>
<dbReference type="InterPro" id="IPR015365">
    <property type="entry name" value="Elong-fact-P_C"/>
</dbReference>
<dbReference type="InterPro" id="IPR012340">
    <property type="entry name" value="NA-bd_OB-fold"/>
</dbReference>
<dbReference type="InterPro" id="IPR014722">
    <property type="entry name" value="Rib_uL2_dom2"/>
</dbReference>
<dbReference type="InterPro" id="IPR020599">
    <property type="entry name" value="Transl_elong_fac_P/YeiP"/>
</dbReference>
<dbReference type="InterPro" id="IPR013185">
    <property type="entry name" value="Transl_elong_KOW-like"/>
</dbReference>
<dbReference type="InterPro" id="IPR001059">
    <property type="entry name" value="Transl_elong_P/YeiP_cen"/>
</dbReference>
<dbReference type="InterPro" id="IPR013852">
    <property type="entry name" value="Transl_elong_P/YeiP_CS"/>
</dbReference>
<dbReference type="InterPro" id="IPR011768">
    <property type="entry name" value="Transl_elongation_fac_P"/>
</dbReference>
<dbReference type="InterPro" id="IPR008991">
    <property type="entry name" value="Translation_prot_SH3-like_sf"/>
</dbReference>
<dbReference type="NCBIfam" id="TIGR00038">
    <property type="entry name" value="efp"/>
    <property type="match status" value="1"/>
</dbReference>
<dbReference type="NCBIfam" id="NF001810">
    <property type="entry name" value="PRK00529.1"/>
    <property type="match status" value="1"/>
</dbReference>
<dbReference type="PANTHER" id="PTHR30053">
    <property type="entry name" value="ELONGATION FACTOR P"/>
    <property type="match status" value="1"/>
</dbReference>
<dbReference type="PANTHER" id="PTHR30053:SF12">
    <property type="entry name" value="ELONGATION FACTOR P (EF-P) FAMILY PROTEIN"/>
    <property type="match status" value="1"/>
</dbReference>
<dbReference type="Pfam" id="PF01132">
    <property type="entry name" value="EFP"/>
    <property type="match status" value="1"/>
</dbReference>
<dbReference type="Pfam" id="PF08207">
    <property type="entry name" value="EFP_N"/>
    <property type="match status" value="1"/>
</dbReference>
<dbReference type="Pfam" id="PF09285">
    <property type="entry name" value="Elong-fact-P_C"/>
    <property type="match status" value="1"/>
</dbReference>
<dbReference type="PIRSF" id="PIRSF005901">
    <property type="entry name" value="EF-P"/>
    <property type="match status" value="1"/>
</dbReference>
<dbReference type="SMART" id="SM01185">
    <property type="entry name" value="EFP"/>
    <property type="match status" value="1"/>
</dbReference>
<dbReference type="SMART" id="SM00841">
    <property type="entry name" value="Elong-fact-P_C"/>
    <property type="match status" value="1"/>
</dbReference>
<dbReference type="SUPFAM" id="SSF50249">
    <property type="entry name" value="Nucleic acid-binding proteins"/>
    <property type="match status" value="2"/>
</dbReference>
<dbReference type="SUPFAM" id="SSF50104">
    <property type="entry name" value="Translation proteins SH3-like domain"/>
    <property type="match status" value="1"/>
</dbReference>
<dbReference type="PROSITE" id="PS01275">
    <property type="entry name" value="EFP"/>
    <property type="match status" value="1"/>
</dbReference>
<gene>
    <name evidence="1" type="primary">efp</name>
    <name type="ordered locus">TPASS_0525</name>
</gene>
<evidence type="ECO:0000255" key="1">
    <source>
        <dbReference type="HAMAP-Rule" id="MF_00141"/>
    </source>
</evidence>